<name>GK_PSHV1</name>
<dbReference type="EMBL" id="AY372243">
    <property type="protein sequence ID" value="AAQ73687.1"/>
    <property type="molecule type" value="Genomic_DNA"/>
</dbReference>
<dbReference type="RefSeq" id="NP_944381.1">
    <property type="nucleotide sequence ID" value="NC_005264.1"/>
</dbReference>
<dbReference type="SMR" id="Q6UDM3"/>
<dbReference type="GlyCosmos" id="Q6UDM3">
    <property type="glycosylation" value="2 sites, No reported glycans"/>
</dbReference>
<dbReference type="GeneID" id="2656957"/>
<dbReference type="KEGG" id="vg:2656957"/>
<dbReference type="Proteomes" id="UP000006840">
    <property type="component" value="Segment"/>
</dbReference>
<dbReference type="GO" id="GO:0044175">
    <property type="term" value="C:host cell endosome membrane"/>
    <property type="evidence" value="ECO:0007669"/>
    <property type="project" value="UniProtKB-SubCell"/>
</dbReference>
<dbReference type="GO" id="GO:0044178">
    <property type="term" value="C:host cell Golgi membrane"/>
    <property type="evidence" value="ECO:0007669"/>
    <property type="project" value="UniProtKB-SubCell"/>
</dbReference>
<dbReference type="GO" id="GO:0020002">
    <property type="term" value="C:host cell plasma membrane"/>
    <property type="evidence" value="ECO:0007669"/>
    <property type="project" value="UniProtKB-SubCell"/>
</dbReference>
<dbReference type="GO" id="GO:0016020">
    <property type="term" value="C:membrane"/>
    <property type="evidence" value="ECO:0007669"/>
    <property type="project" value="UniProtKB-KW"/>
</dbReference>
<dbReference type="GO" id="GO:0039700">
    <property type="term" value="P:fusion of viral membrane with host outer nuclear membrane"/>
    <property type="evidence" value="ECO:0007669"/>
    <property type="project" value="UniProtKB-KW"/>
</dbReference>
<dbReference type="GO" id="GO:0060141">
    <property type="term" value="P:symbiont-mediated induction of syncytium formation"/>
    <property type="evidence" value="ECO:0007669"/>
    <property type="project" value="UniProtKB-KW"/>
</dbReference>
<dbReference type="InterPro" id="IPR002567">
    <property type="entry name" value="GK"/>
</dbReference>
<dbReference type="Pfam" id="PF01621">
    <property type="entry name" value="Fusion_gly_K"/>
    <property type="match status" value="1"/>
</dbReference>
<reference key="1">
    <citation type="journal article" date="2006" name="J. Virol.">
        <title>Psittacid herpesvirus 1 and infectious laryngotracheitis virus: Comparative genome sequence analysis of two avian alphaherpesviruses.</title>
        <authorList>
            <person name="Thureen D.R."/>
            <person name="Keeler C.L. Jr."/>
        </authorList>
    </citation>
    <scope>NUCLEOTIDE SEQUENCE [LARGE SCALE GENOMIC DNA]</scope>
</reference>
<sequence>MSRVQCLRLAAVIASISHLIFLVWFVCWNSVLENNEDCVYATRSLAAQVQLGELGANMSTETRLRIRGAAAEPVSVGPFNRSLVYVINSDASLLYSPRETQDGRCFANTFHKTDMAAVMKVYPDGKNVVLVLEMADCMAYLWFFQVRTATAALLMYLAFLCVNRQRRGFGPWLDSASRVSAEAYYLNYWTTLAARVFLKVRYLKLSRFLREIEYRREQTWRQFSIDTLGFYLMHPLALLLRAIETILYFASLVASATVLRVNFDPCSVVLPNHVKVFAWVFVAALGALEVVSAIDHLRRETRSARDAAAVIRPTNIIAACCANIISHVLLRMLYGAALVLVVIGALKYEREIQTRLLG</sequence>
<comment type="function">
    <text evidence="1">Glycoprotein that probably modulates membrane fusion events during secondary envelopment of cytoplasmic capsids that bud into specific trans-Golgi network (TGN)-derived membranes. Also plays a role, together with gB, in virus-induced cell-to-cell fusion (syncytia formation). Seems to block fusion of virions with infected-cell membranes (By similarity).</text>
</comment>
<comment type="subunit">
    <text evidence="1">Interacts (via UL20 interaction region) with protein UL20 (via N-terminus); this interaction probably plays a role in the coordinate transport of protein UL20 and gK to the trans-Golgi network (TGN), and is required for the cell surface expression of gK.</text>
</comment>
<comment type="subcellular location">
    <subcellularLocation>
        <location evidence="1">Host cell membrane</location>
        <topology evidence="1">Multi-pass membrane protein</topology>
    </subcellularLocation>
    <subcellularLocation>
        <location evidence="1">Host endosome membrane</location>
        <topology evidence="1">Multi-pass membrane protein</topology>
    </subcellularLocation>
    <subcellularLocation>
        <location evidence="1">Host Golgi apparatus membrane</location>
        <topology evidence="1">Multi-pass membrane protein</topology>
    </subcellularLocation>
    <text evidence="1">During virion morphogenesis, this protein probably accumulates in the endosomes and trans-Golgi where secondary envelopment occurs. It is probably transported with UL20 to the cell surface from where it is endocytosed and directed to the trans-Golgi network (TGN). Cell surface expression of gK is required for virus-induced cell-to-cell fusion. Likely not present in extracellular virions (By similarity).</text>
</comment>
<comment type="similarity">
    <text evidence="3">Belongs to the alphaherpesvirinae glycoprotein K family.</text>
</comment>
<organism>
    <name type="scientific">Psittacid herpesvirus 1 (isolate Amazon parrot/-/97-0001/1997)</name>
    <name type="common">PsHV-1</name>
    <name type="synonym">Pacheco's disease virus</name>
    <dbReference type="NCBI Taxonomy" id="670426"/>
    <lineage>
        <taxon>Viruses</taxon>
        <taxon>Duplodnaviria</taxon>
        <taxon>Heunggongvirae</taxon>
        <taxon>Peploviricota</taxon>
        <taxon>Herviviricetes</taxon>
        <taxon>Herpesvirales</taxon>
        <taxon>Orthoherpesviridae</taxon>
        <taxon>Alphaherpesvirinae</taxon>
        <taxon>Iltovirus</taxon>
        <taxon>Iltovirus psittacidalpha1</taxon>
        <taxon>Psittacid alphaherpesvirus 1</taxon>
    </lineage>
</organism>
<feature type="signal peptide" evidence="2">
    <location>
        <begin position="1"/>
        <end position="33"/>
    </location>
</feature>
<feature type="chain" id="PRO_0000406831" description="Envelope glycoprotein K">
    <location>
        <begin position="34"/>
        <end position="358"/>
    </location>
</feature>
<feature type="topological domain" description="Extracellular" evidence="2">
    <location>
        <begin position="34"/>
        <end position="141"/>
    </location>
</feature>
<feature type="transmembrane region" description="Helical" evidence="2">
    <location>
        <begin position="142"/>
        <end position="162"/>
    </location>
</feature>
<feature type="topological domain" description="Cytoplasmic" evidence="2">
    <location>
        <begin position="163"/>
        <end position="235"/>
    </location>
</feature>
<feature type="transmembrane region" description="Helical" evidence="2">
    <location>
        <begin position="236"/>
        <end position="256"/>
    </location>
</feature>
<feature type="topological domain" description="Extracellular" evidence="2">
    <location>
        <begin position="257"/>
        <end position="273"/>
    </location>
</feature>
<feature type="transmembrane region" description="Helical" evidence="2">
    <location>
        <begin position="274"/>
        <end position="294"/>
    </location>
</feature>
<feature type="topological domain" description="Cytoplasmic" evidence="2">
    <location>
        <begin position="295"/>
        <end position="323"/>
    </location>
</feature>
<feature type="transmembrane region" description="Helical" evidence="2">
    <location>
        <begin position="324"/>
        <end position="344"/>
    </location>
</feature>
<feature type="topological domain" description="Extracellular" evidence="2">
    <location>
        <begin position="345"/>
        <end position="358"/>
    </location>
</feature>
<feature type="glycosylation site" description="N-linked (GlcNAc...) asparagine; by host" evidence="2">
    <location>
        <position position="57"/>
    </location>
</feature>
<feature type="glycosylation site" description="N-linked (GlcNAc...) asparagine; by host" evidence="2">
    <location>
        <position position="80"/>
    </location>
</feature>
<keyword id="KW-0325">Glycoprotein</keyword>
<keyword id="KW-1032">Host cell membrane</keyword>
<keyword id="KW-1039">Host endosome</keyword>
<keyword id="KW-1040">Host Golgi apparatus</keyword>
<keyword id="KW-1043">Host membrane</keyword>
<keyword id="KW-0472">Membrane</keyword>
<keyword id="KW-1185">Reference proteome</keyword>
<keyword id="KW-0732">Signal</keyword>
<keyword id="KW-1180">Syncytium formation induced by viral infection</keyword>
<keyword id="KW-0812">Transmembrane</keyword>
<keyword id="KW-1133">Transmembrane helix</keyword>
<keyword id="KW-1181">Viral primary envelope fusion with host outer nuclear membrane</keyword>
<keyword id="KW-1188">Viral release from host cell</keyword>
<gene>
    <name type="primary">gK</name>
    <name type="ORF">UL53</name>
</gene>
<accession>Q6UDM3</accession>
<protein>
    <recommendedName>
        <fullName>Envelope glycoprotein K</fullName>
    </recommendedName>
    <alternativeName>
        <fullName>Syncytial protein</fullName>
    </alternativeName>
</protein>
<evidence type="ECO:0000250" key="1"/>
<evidence type="ECO:0000255" key="2"/>
<evidence type="ECO:0000305" key="3"/>
<proteinExistence type="inferred from homology"/>
<organismHost>
    <name type="scientific">Amazona oratrix</name>
    <name type="common">yellow-headed parrot</name>
    <dbReference type="NCBI Taxonomy" id="152276"/>
</organismHost>